<name>RLMC_ECOL6</name>
<sequence>MQCALYDAGRCRSCQWITQPIPEQLSAKTADLKNLLADFPVEEWCAPVSGPEQGFRNKAKMVVSGSVEKPLLGMLHRDGTPEDLCDCPLYPASFAPVFAALKPFIARAGLTPYNVARKRGELKYILLTESQSDGGMMLRFVLRSDTKLAQLRKALPWLQEQLPQLKVITVNIQPVHMAIMEGETEIYLTEQQALAERFNDVPLWIRPQSFFQTNPAVASQLYATARDWVRQLPVKHMWDLFCGVGGFGLHCATPDMQLTGIEIAPEAIACAKQSAAELGLTRLQFQALDSTQFATAQGEVPELVLVNPPRRGIGKPLCDYLSTMAPRFIIYSSCNAQTMAKDIRELPGYRIERVQLFDMFPHTAHYEVLTLLVQQ</sequence>
<dbReference type="EC" id="2.1.1.189" evidence="1"/>
<dbReference type="EMBL" id="AE014075">
    <property type="protein sequence ID" value="AAN79465.1"/>
    <property type="molecule type" value="Genomic_DNA"/>
</dbReference>
<dbReference type="RefSeq" id="WP_001149714.1">
    <property type="nucleotide sequence ID" value="NZ_CP051263.1"/>
</dbReference>
<dbReference type="SMR" id="Q8FJE7"/>
<dbReference type="STRING" id="199310.c0992"/>
<dbReference type="KEGG" id="ecc:c0992"/>
<dbReference type="eggNOG" id="COG2265">
    <property type="taxonomic scope" value="Bacteria"/>
</dbReference>
<dbReference type="HOGENOM" id="CLU_014689_0_0_6"/>
<dbReference type="BioCyc" id="ECOL199310:C0992-MONOMER"/>
<dbReference type="Proteomes" id="UP000001410">
    <property type="component" value="Chromosome"/>
</dbReference>
<dbReference type="GO" id="GO:0051539">
    <property type="term" value="F:4 iron, 4 sulfur cluster binding"/>
    <property type="evidence" value="ECO:0007669"/>
    <property type="project" value="UniProtKB-KW"/>
</dbReference>
<dbReference type="GO" id="GO:0005506">
    <property type="term" value="F:iron ion binding"/>
    <property type="evidence" value="ECO:0007669"/>
    <property type="project" value="UniProtKB-UniRule"/>
</dbReference>
<dbReference type="GO" id="GO:0070041">
    <property type="term" value="F:rRNA (uridine-C5-)-methyltransferase activity"/>
    <property type="evidence" value="ECO:0007669"/>
    <property type="project" value="UniProtKB-UniRule"/>
</dbReference>
<dbReference type="GO" id="GO:0070475">
    <property type="term" value="P:rRNA base methylation"/>
    <property type="evidence" value="ECO:0007669"/>
    <property type="project" value="TreeGrafter"/>
</dbReference>
<dbReference type="CDD" id="cd02440">
    <property type="entry name" value="AdoMet_MTases"/>
    <property type="match status" value="1"/>
</dbReference>
<dbReference type="FunFam" id="2.40.50.1070:FF:000002">
    <property type="entry name" value="23S rRNA (uracil(747)-C(5))-methyltransferase RlmC"/>
    <property type="match status" value="1"/>
</dbReference>
<dbReference type="FunFam" id="3.40.50.150:FF:000049">
    <property type="entry name" value="23S rRNA (uracil(747)-C(5))-methyltransferase RlmC"/>
    <property type="match status" value="1"/>
</dbReference>
<dbReference type="Gene3D" id="2.40.50.1070">
    <property type="match status" value="1"/>
</dbReference>
<dbReference type="Gene3D" id="3.40.50.150">
    <property type="entry name" value="Vaccinia Virus protein VP39"/>
    <property type="match status" value="1"/>
</dbReference>
<dbReference type="HAMAP" id="MF_01012">
    <property type="entry name" value="23SrRNA_methyltr_RlmC"/>
    <property type="match status" value="1"/>
</dbReference>
<dbReference type="InterPro" id="IPR011825">
    <property type="entry name" value="23SrRNA_MeTrfase_RlmC"/>
</dbReference>
<dbReference type="InterPro" id="IPR030390">
    <property type="entry name" value="MeTrfase_TrmA_AS"/>
</dbReference>
<dbReference type="InterPro" id="IPR030391">
    <property type="entry name" value="MeTrfase_TrmA_CS"/>
</dbReference>
<dbReference type="InterPro" id="IPR029063">
    <property type="entry name" value="SAM-dependent_MTases_sf"/>
</dbReference>
<dbReference type="InterPro" id="IPR010280">
    <property type="entry name" value="U5_MeTrfase_fam"/>
</dbReference>
<dbReference type="NCBIfam" id="TIGR02085">
    <property type="entry name" value="meth_trns_rumB"/>
    <property type="match status" value="1"/>
</dbReference>
<dbReference type="PANTHER" id="PTHR11061">
    <property type="entry name" value="RNA M5U METHYLTRANSFERASE"/>
    <property type="match status" value="1"/>
</dbReference>
<dbReference type="PANTHER" id="PTHR11061:SF30">
    <property type="entry name" value="TRNA (URACIL(54)-C(5))-METHYLTRANSFERASE"/>
    <property type="match status" value="1"/>
</dbReference>
<dbReference type="Pfam" id="PF05958">
    <property type="entry name" value="tRNA_U5-meth_tr"/>
    <property type="match status" value="1"/>
</dbReference>
<dbReference type="SUPFAM" id="SSF53335">
    <property type="entry name" value="S-adenosyl-L-methionine-dependent methyltransferases"/>
    <property type="match status" value="1"/>
</dbReference>
<dbReference type="PROSITE" id="PS51687">
    <property type="entry name" value="SAM_MT_RNA_M5U"/>
    <property type="match status" value="1"/>
</dbReference>
<dbReference type="PROSITE" id="PS01230">
    <property type="entry name" value="TRMA_1"/>
    <property type="match status" value="1"/>
</dbReference>
<dbReference type="PROSITE" id="PS01231">
    <property type="entry name" value="TRMA_2"/>
    <property type="match status" value="1"/>
</dbReference>
<comment type="function">
    <text evidence="1">Catalyzes the formation of 5-methyl-uridine at position 747 (m5U747) in 23S rRNA.</text>
</comment>
<comment type="catalytic activity">
    <reaction evidence="1">
        <text>uridine(747) in 23S rRNA + S-adenosyl-L-methionine = 5-methyluridine(747) in 23S rRNA + S-adenosyl-L-homocysteine + H(+)</text>
        <dbReference type="Rhea" id="RHEA:42628"/>
        <dbReference type="Rhea" id="RHEA-COMP:10154"/>
        <dbReference type="Rhea" id="RHEA-COMP:10155"/>
        <dbReference type="ChEBI" id="CHEBI:15378"/>
        <dbReference type="ChEBI" id="CHEBI:57856"/>
        <dbReference type="ChEBI" id="CHEBI:59789"/>
        <dbReference type="ChEBI" id="CHEBI:65315"/>
        <dbReference type="ChEBI" id="CHEBI:74447"/>
        <dbReference type="EC" id="2.1.1.189"/>
    </reaction>
</comment>
<comment type="similarity">
    <text evidence="1">Belongs to the class I-like SAM-binding methyltransferase superfamily. RNA M5U methyltransferase family. RlmC subfamily.</text>
</comment>
<protein>
    <recommendedName>
        <fullName evidence="1">23S rRNA (uracil(747)-C(5))-methyltransferase RlmC</fullName>
        <ecNumber evidence="1">2.1.1.189</ecNumber>
    </recommendedName>
    <alternativeName>
        <fullName evidence="1">23S rRNA(m5U747)-methyltransferase</fullName>
    </alternativeName>
</protein>
<gene>
    <name evidence="1" type="primary">rlmC</name>
    <name type="synonym">rumB</name>
    <name type="ordered locus">c0992</name>
</gene>
<evidence type="ECO:0000255" key="1">
    <source>
        <dbReference type="HAMAP-Rule" id="MF_01012"/>
    </source>
</evidence>
<accession>Q8FJE7</accession>
<organism>
    <name type="scientific">Escherichia coli O6:H1 (strain CFT073 / ATCC 700928 / UPEC)</name>
    <dbReference type="NCBI Taxonomy" id="199310"/>
    <lineage>
        <taxon>Bacteria</taxon>
        <taxon>Pseudomonadati</taxon>
        <taxon>Pseudomonadota</taxon>
        <taxon>Gammaproteobacteria</taxon>
        <taxon>Enterobacterales</taxon>
        <taxon>Enterobacteriaceae</taxon>
        <taxon>Escherichia</taxon>
    </lineage>
</organism>
<keyword id="KW-0004">4Fe-4S</keyword>
<keyword id="KW-0408">Iron</keyword>
<keyword id="KW-0411">Iron-sulfur</keyword>
<keyword id="KW-0479">Metal-binding</keyword>
<keyword id="KW-0489">Methyltransferase</keyword>
<keyword id="KW-1185">Reference proteome</keyword>
<keyword id="KW-0698">rRNA processing</keyword>
<keyword id="KW-0949">S-adenosyl-L-methionine</keyword>
<keyword id="KW-0808">Transferase</keyword>
<reference key="1">
    <citation type="journal article" date="2002" name="Proc. Natl. Acad. Sci. U.S.A.">
        <title>Extensive mosaic structure revealed by the complete genome sequence of uropathogenic Escherichia coli.</title>
        <authorList>
            <person name="Welch R.A."/>
            <person name="Burland V."/>
            <person name="Plunkett G. III"/>
            <person name="Redford P."/>
            <person name="Roesch P."/>
            <person name="Rasko D."/>
            <person name="Buckles E.L."/>
            <person name="Liou S.-R."/>
            <person name="Boutin A."/>
            <person name="Hackett J."/>
            <person name="Stroud D."/>
            <person name="Mayhew G.F."/>
            <person name="Rose D.J."/>
            <person name="Zhou S."/>
            <person name="Schwartz D.C."/>
            <person name="Perna N.T."/>
            <person name="Mobley H.L.T."/>
            <person name="Donnenberg M.S."/>
            <person name="Blattner F.R."/>
        </authorList>
    </citation>
    <scope>NUCLEOTIDE SEQUENCE [LARGE SCALE GENOMIC DNA]</scope>
    <source>
        <strain>CFT073 / ATCC 700928 / UPEC</strain>
    </source>
</reference>
<feature type="chain" id="PRO_0000161926" description="23S rRNA (uracil(747)-C(5))-methyltransferase RlmC">
    <location>
        <begin position="1"/>
        <end position="375"/>
    </location>
</feature>
<feature type="active site" description="Nucleophile" evidence="1">
    <location>
        <position position="334"/>
    </location>
</feature>
<feature type="binding site" evidence="1">
    <location>
        <position position="3"/>
    </location>
    <ligand>
        <name>[4Fe-4S] cluster</name>
        <dbReference type="ChEBI" id="CHEBI:49883"/>
    </ligand>
</feature>
<feature type="binding site" evidence="1">
    <location>
        <position position="11"/>
    </location>
    <ligand>
        <name>[4Fe-4S] cluster</name>
        <dbReference type="ChEBI" id="CHEBI:49883"/>
    </ligand>
</feature>
<feature type="binding site" evidence="1">
    <location>
        <position position="14"/>
    </location>
    <ligand>
        <name>[4Fe-4S] cluster</name>
        <dbReference type="ChEBI" id="CHEBI:49883"/>
    </ligand>
</feature>
<feature type="binding site" evidence="1">
    <location>
        <position position="87"/>
    </location>
    <ligand>
        <name>[4Fe-4S] cluster</name>
        <dbReference type="ChEBI" id="CHEBI:49883"/>
    </ligand>
</feature>
<feature type="binding site" evidence="1">
    <location>
        <position position="212"/>
    </location>
    <ligand>
        <name>S-adenosyl-L-methionine</name>
        <dbReference type="ChEBI" id="CHEBI:59789"/>
    </ligand>
</feature>
<feature type="binding site" evidence="1">
    <location>
        <position position="241"/>
    </location>
    <ligand>
        <name>S-adenosyl-L-methionine</name>
        <dbReference type="ChEBI" id="CHEBI:59789"/>
    </ligand>
</feature>
<feature type="binding site" evidence="1">
    <location>
        <position position="262"/>
    </location>
    <ligand>
        <name>S-adenosyl-L-methionine</name>
        <dbReference type="ChEBI" id="CHEBI:59789"/>
    </ligand>
</feature>
<feature type="binding site" evidence="1">
    <location>
        <position position="307"/>
    </location>
    <ligand>
        <name>S-adenosyl-L-methionine</name>
        <dbReference type="ChEBI" id="CHEBI:59789"/>
    </ligand>
</feature>
<proteinExistence type="inferred from homology"/>